<gene>
    <name evidence="1" type="primary">yidC</name>
    <name type="ordered locus">lpl2930</name>
</gene>
<keyword id="KW-0997">Cell inner membrane</keyword>
<keyword id="KW-1003">Cell membrane</keyword>
<keyword id="KW-0143">Chaperone</keyword>
<keyword id="KW-0472">Membrane</keyword>
<keyword id="KW-0653">Protein transport</keyword>
<keyword id="KW-0812">Transmembrane</keyword>
<keyword id="KW-1133">Transmembrane helix</keyword>
<keyword id="KW-0813">Transport</keyword>
<protein>
    <recommendedName>
        <fullName evidence="1">Membrane protein insertase YidC</fullName>
    </recommendedName>
    <alternativeName>
        <fullName evidence="1">Foldase YidC</fullName>
    </alternativeName>
    <alternativeName>
        <fullName evidence="1">Membrane integrase YidC</fullName>
    </alternativeName>
    <alternativeName>
        <fullName evidence="1">Membrane protein YidC</fullName>
    </alternativeName>
</protein>
<dbReference type="EMBL" id="CR628337">
    <property type="protein sequence ID" value="CAH17174.1"/>
    <property type="molecule type" value="Genomic_DNA"/>
</dbReference>
<dbReference type="RefSeq" id="WP_011216834.1">
    <property type="nucleotide sequence ID" value="NC_006369.1"/>
</dbReference>
<dbReference type="SMR" id="Q5WSE9"/>
<dbReference type="KEGG" id="lpf:lpl2930"/>
<dbReference type="LegioList" id="lpl2930"/>
<dbReference type="HOGENOM" id="CLU_016535_3_0_6"/>
<dbReference type="Proteomes" id="UP000002517">
    <property type="component" value="Chromosome"/>
</dbReference>
<dbReference type="GO" id="GO:0005886">
    <property type="term" value="C:plasma membrane"/>
    <property type="evidence" value="ECO:0007669"/>
    <property type="project" value="UniProtKB-SubCell"/>
</dbReference>
<dbReference type="GO" id="GO:0032977">
    <property type="term" value="F:membrane insertase activity"/>
    <property type="evidence" value="ECO:0007669"/>
    <property type="project" value="InterPro"/>
</dbReference>
<dbReference type="GO" id="GO:0051205">
    <property type="term" value="P:protein insertion into membrane"/>
    <property type="evidence" value="ECO:0007669"/>
    <property type="project" value="TreeGrafter"/>
</dbReference>
<dbReference type="GO" id="GO:0015031">
    <property type="term" value="P:protein transport"/>
    <property type="evidence" value="ECO:0007669"/>
    <property type="project" value="UniProtKB-KW"/>
</dbReference>
<dbReference type="CDD" id="cd20070">
    <property type="entry name" value="5TM_YidC_Alb3"/>
    <property type="match status" value="1"/>
</dbReference>
<dbReference type="CDD" id="cd19961">
    <property type="entry name" value="EcYidC-like_peri"/>
    <property type="match status" value="1"/>
</dbReference>
<dbReference type="Gene3D" id="2.70.98.90">
    <property type="match status" value="1"/>
</dbReference>
<dbReference type="HAMAP" id="MF_01810">
    <property type="entry name" value="YidC_type1"/>
    <property type="match status" value="1"/>
</dbReference>
<dbReference type="InterPro" id="IPR019998">
    <property type="entry name" value="Membr_insert_YidC"/>
</dbReference>
<dbReference type="InterPro" id="IPR028053">
    <property type="entry name" value="Membr_insert_YidC_N"/>
</dbReference>
<dbReference type="InterPro" id="IPR001708">
    <property type="entry name" value="YidC/ALB3/OXA1/COX18"/>
</dbReference>
<dbReference type="InterPro" id="IPR028055">
    <property type="entry name" value="YidC/Oxa/ALB_C"/>
</dbReference>
<dbReference type="InterPro" id="IPR047196">
    <property type="entry name" value="YidC_ALB_C"/>
</dbReference>
<dbReference type="InterPro" id="IPR038221">
    <property type="entry name" value="YidC_periplasmic_sf"/>
</dbReference>
<dbReference type="NCBIfam" id="NF002352">
    <property type="entry name" value="PRK01318.1-3"/>
    <property type="match status" value="1"/>
</dbReference>
<dbReference type="NCBIfam" id="TIGR03593">
    <property type="entry name" value="yidC_nterm"/>
    <property type="match status" value="1"/>
</dbReference>
<dbReference type="NCBIfam" id="TIGR03592">
    <property type="entry name" value="yidC_oxa1_cterm"/>
    <property type="match status" value="1"/>
</dbReference>
<dbReference type="PANTHER" id="PTHR12428:SF65">
    <property type="entry name" value="CYTOCHROME C OXIDASE ASSEMBLY PROTEIN COX18, MITOCHONDRIAL"/>
    <property type="match status" value="1"/>
</dbReference>
<dbReference type="PANTHER" id="PTHR12428">
    <property type="entry name" value="OXA1"/>
    <property type="match status" value="1"/>
</dbReference>
<dbReference type="Pfam" id="PF02096">
    <property type="entry name" value="60KD_IMP"/>
    <property type="match status" value="1"/>
</dbReference>
<dbReference type="Pfam" id="PF14849">
    <property type="entry name" value="YidC_periplas"/>
    <property type="match status" value="1"/>
</dbReference>
<dbReference type="PRINTS" id="PR00701">
    <property type="entry name" value="60KDINNERMP"/>
</dbReference>
<dbReference type="PRINTS" id="PR01900">
    <property type="entry name" value="YIDCPROTEIN"/>
</dbReference>
<comment type="function">
    <text evidence="1">Required for the insertion and/or proper folding and/or complex formation of integral membrane proteins into the membrane. Involved in integration of membrane proteins that insert both dependently and independently of the Sec translocase complex, as well as at least some lipoproteins. Aids folding of multispanning membrane proteins.</text>
</comment>
<comment type="subunit">
    <text evidence="1">Interacts with the Sec translocase complex via SecD. Specifically interacts with transmembrane segments of nascent integral membrane proteins during membrane integration.</text>
</comment>
<comment type="subcellular location">
    <subcellularLocation>
        <location evidence="1">Cell inner membrane</location>
        <topology evidence="1">Multi-pass membrane protein</topology>
    </subcellularLocation>
</comment>
<comment type="similarity">
    <text evidence="1">Belongs to the OXA1/ALB3/YidC family. Type 1 subfamily.</text>
</comment>
<reference key="1">
    <citation type="journal article" date="2004" name="Nat. Genet.">
        <title>Evidence in the Legionella pneumophila genome for exploitation of host cell functions and high genome plasticity.</title>
        <authorList>
            <person name="Cazalet C."/>
            <person name="Rusniok C."/>
            <person name="Brueggemann H."/>
            <person name="Zidane N."/>
            <person name="Magnier A."/>
            <person name="Ma L."/>
            <person name="Tichit M."/>
            <person name="Jarraud S."/>
            <person name="Bouchier C."/>
            <person name="Vandenesch F."/>
            <person name="Kunst F."/>
            <person name="Etienne J."/>
            <person name="Glaser P."/>
            <person name="Buchrieser C."/>
        </authorList>
    </citation>
    <scope>NUCLEOTIDE SEQUENCE [LARGE SCALE GENOMIC DNA]</scope>
    <source>
        <strain>Lens</strain>
    </source>
</reference>
<sequence length="556" mass="62662">MDIRRIVLYMALALIGLSLWNAWQIDYPAKQPVEEKTASQLTSDGHLLPQIIPSNAEQPVTLKAEEKASSGKQLIQVKTDILDVDIDLKNGDIVKGLLLDYPLSVEDKNKPFPLLQNQASQRYVANSSLFVLDGQTPQSLDFDFTSEKEYYELKPDQNQLIVTLNGKSEDGLDVKKEFVFTKGSYLIEVNYKIANIGNSLWKGYFNTQLLRSSPKEDKSSIFHIGSYTGASFSNPGKNRYQKVSFSDMSKSNLDVDAKGGWIAMQQHYFLSAWVPNADSENKFYTLATDKDYTIGAVSQPITVKPKEDKIVGSKLYIGPEITSVLKGISPSLDLTVDYGILWFLSSLLFSLMKAIYTVVGNWGWSIVLVTVLIKLAFYRLSATSYKSMASMRKLQPKLQALRERYGDDKAKISQATMELYKQEKVNPLGGCLPILIQIPVFIALYWVLLESVELRQAPFIFWINDLASADPYHVLPLIMGATMLIQQKLNPAPADPMQAKVMMFLPILFTGLFWNFPSGLVLYWIVNNTLSILQQWYITRKYSDEKPAKKVVATAK</sequence>
<accession>Q5WSE9</accession>
<organism>
    <name type="scientific">Legionella pneumophila (strain Lens)</name>
    <dbReference type="NCBI Taxonomy" id="297245"/>
    <lineage>
        <taxon>Bacteria</taxon>
        <taxon>Pseudomonadati</taxon>
        <taxon>Pseudomonadota</taxon>
        <taxon>Gammaproteobacteria</taxon>
        <taxon>Legionellales</taxon>
        <taxon>Legionellaceae</taxon>
        <taxon>Legionella</taxon>
    </lineage>
</organism>
<name>YIDC_LEGPL</name>
<feature type="chain" id="PRO_1000070115" description="Membrane protein insertase YidC">
    <location>
        <begin position="1"/>
        <end position="556"/>
    </location>
</feature>
<feature type="transmembrane region" description="Helical" evidence="1">
    <location>
        <begin position="6"/>
        <end position="26"/>
    </location>
</feature>
<feature type="transmembrane region" description="Helical" evidence="1">
    <location>
        <begin position="332"/>
        <end position="352"/>
    </location>
</feature>
<feature type="transmembrane region" description="Helical" evidence="1">
    <location>
        <begin position="358"/>
        <end position="378"/>
    </location>
</feature>
<feature type="transmembrane region" description="Helical" evidence="1">
    <location>
        <begin position="428"/>
        <end position="448"/>
    </location>
</feature>
<feature type="transmembrane region" description="Helical" evidence="1">
    <location>
        <begin position="501"/>
        <end position="521"/>
    </location>
</feature>
<proteinExistence type="inferred from homology"/>
<evidence type="ECO:0000255" key="1">
    <source>
        <dbReference type="HAMAP-Rule" id="MF_01810"/>
    </source>
</evidence>